<keyword id="KW-0007">Acetylation</keyword>
<keyword id="KW-0158">Chromosome</keyword>
<keyword id="KW-0963">Cytoplasm</keyword>
<keyword id="KW-0238">DNA-binding</keyword>
<keyword id="KW-0240">DNA-directed RNA polymerase</keyword>
<keyword id="KW-0378">Hydrolase</keyword>
<keyword id="KW-1017">Isopeptide bond</keyword>
<keyword id="KW-0460">Magnesium</keyword>
<keyword id="KW-0479">Metal-binding</keyword>
<keyword id="KW-0488">Methylation</keyword>
<keyword id="KW-0548">Nucleotidyltransferase</keyword>
<keyword id="KW-0539">Nucleus</keyword>
<keyword id="KW-0597">Phosphoprotein</keyword>
<keyword id="KW-1185">Reference proteome</keyword>
<keyword id="KW-0677">Repeat</keyword>
<keyword id="KW-0804">Transcription</keyword>
<keyword id="KW-0808">Transferase</keyword>
<keyword id="KW-0832">Ubl conjugation</keyword>
<keyword id="KW-0862">Zinc</keyword>
<gene>
    <name type="primary">Polr2a</name>
    <name type="synonym">Rpii215</name>
    <name type="synonym">Rpo2-1</name>
</gene>
<reference key="1">
    <citation type="journal article" date="1987" name="J. Biol. Chem.">
        <title>Cloning and sequence analysis of the mouse genomic locus encoding the largest subunit of RNA polymerase II.</title>
        <authorList>
            <person name="Ahearn J.M. Jr."/>
            <person name="Bartolomei M.S."/>
            <person name="West M.L."/>
            <person name="Cisek L.J."/>
            <person name="Corden J.L."/>
        </authorList>
    </citation>
    <scope>NUCLEOTIDE SEQUENCE [GENOMIC DNA]</scope>
</reference>
<reference key="2">
    <citation type="journal article" date="2009" name="PLoS Biol.">
        <title>Lineage-specific biology revealed by a finished genome assembly of the mouse.</title>
        <authorList>
            <person name="Church D.M."/>
            <person name="Goodstadt L."/>
            <person name="Hillier L.W."/>
            <person name="Zody M.C."/>
            <person name="Goldstein S."/>
            <person name="She X."/>
            <person name="Bult C.J."/>
            <person name="Agarwala R."/>
            <person name="Cherry J.L."/>
            <person name="DiCuccio M."/>
            <person name="Hlavina W."/>
            <person name="Kapustin Y."/>
            <person name="Meric P."/>
            <person name="Maglott D."/>
            <person name="Birtle Z."/>
            <person name="Marques A.C."/>
            <person name="Graves T."/>
            <person name="Zhou S."/>
            <person name="Teague B."/>
            <person name="Potamousis K."/>
            <person name="Churas C."/>
            <person name="Place M."/>
            <person name="Herschleb J."/>
            <person name="Runnheim R."/>
            <person name="Forrest D."/>
            <person name="Amos-Landgraf J."/>
            <person name="Schwartz D.C."/>
            <person name="Cheng Z."/>
            <person name="Lindblad-Toh K."/>
            <person name="Eichler E.E."/>
            <person name="Ponting C.P."/>
        </authorList>
    </citation>
    <scope>NUCLEOTIDE SEQUENCE [LARGE SCALE GENOMIC DNA]</scope>
    <source>
        <strain>C57BL/6J</strain>
    </source>
</reference>
<reference key="3">
    <citation type="journal article" date="1985" name="Proc. Natl. Acad. Sci. U.S.A.">
        <title>A unique structure at the carboxyl terminus of the largest subunit of eukaryotic RNA polymerase II.</title>
        <authorList>
            <person name="Corden J.L."/>
            <person name="Cadena D.L."/>
            <person name="Ahearn J.M. Jr."/>
            <person name="Dahmus M.E."/>
        </authorList>
    </citation>
    <scope>NUCLEOTIDE SEQUENCE [GENOMIC DNA] OF 1587-1970</scope>
</reference>
<reference key="4">
    <citation type="journal article" date="1992" name="Nucleic Acids Res.">
        <title>Complete sequence of the human RNA polymerase II largest subunit.</title>
        <authorList>
            <person name="Wintzerith M."/>
            <person name="Acker J."/>
            <person name="Vicaire S."/>
            <person name="Vigneron M."/>
            <person name="Kedinger C."/>
        </authorList>
    </citation>
    <scope>SEQUENCE REVISION</scope>
    <scope>PRESENCE OF AN ADDITIONAL EXON</scope>
</reference>
<reference key="5">
    <citation type="journal article" date="1996" name="Proc. Natl. Acad. Sci. U.S.A.">
        <title>The C-terminal domain of the largest subunit of RNA polymerase II interacts with a novel set of serine/arginine-rich proteins.</title>
        <authorList>
            <person name="Yuryev A."/>
            <person name="Patturajan M."/>
            <person name="Litingtung Y."/>
            <person name="Joshi R.V."/>
            <person name="Gentile C."/>
            <person name="Gebara M."/>
            <person name="Corden J.L."/>
        </authorList>
    </citation>
    <scope>INTERACTION WITH SCAF8</scope>
</reference>
<reference key="6">
    <citation type="journal article" date="2000" name="Science">
        <title>A myosin I isoform in the nucleus.</title>
        <authorList>
            <person name="Pestic-Dragovich L."/>
            <person name="Stojiljkovic L."/>
            <person name="Philimonenko A.A."/>
            <person name="Nowak G."/>
            <person name="Ke Y."/>
            <person name="Settlage R.E."/>
            <person name="Shabanowitz J."/>
            <person name="Hunt D.F."/>
            <person name="Hozak P."/>
            <person name="de Lanerolle P."/>
        </authorList>
    </citation>
    <scope>INTERACTION WITH MYO1C</scope>
</reference>
<reference key="7">
    <citation type="journal article" date="2007" name="Mol. Cell. Biol.">
        <title>Wwp2-mediated ubiquitination of the RNA polymerase II large subunit in mouse embryonic pluripotent stem cells.</title>
        <authorList>
            <person name="Li H."/>
            <person name="Zhang Z."/>
            <person name="Wang B."/>
            <person name="Zhang J."/>
            <person name="Zhao Y."/>
            <person name="Jin Y."/>
        </authorList>
    </citation>
    <scope>UBIQUITINATION AT LYS-1859; LYS-1866; LYS-1873; LYS-1887; LYS-1908 AND LYS-1922</scope>
    <scope>IDENTIFICATION BY MASS SPECTROMETRY</scope>
    <scope>INTERACTION WITH WWP2</scope>
    <scope>MUTAGENESIS OF LYS-1859; LYS-1866; LYS-1873; LYS-1887; LYS-1908 AND LYS-1922</scope>
</reference>
<reference key="8">
    <citation type="journal article" date="2007" name="Proc. Natl. Acad. Sci. U.S.A.">
        <title>Large-scale phosphorylation analysis of mouse liver.</title>
        <authorList>
            <person name="Villen J."/>
            <person name="Beausoleil S.A."/>
            <person name="Gerber S.A."/>
            <person name="Gygi S.P."/>
        </authorList>
    </citation>
    <scope>IDENTIFICATION BY MASS SPECTROMETRY [LARGE SCALE ANALYSIS]</scope>
    <source>
        <tissue>Liver</tissue>
    </source>
</reference>
<reference key="9">
    <citation type="journal article" date="2008" name="Genes Dev.">
        <title>The Iws1:Spt6:CTD complex controls cotranscriptional mRNA biosynthesis and HYPB/Setd2-mediated histone H3K36 methylation.</title>
        <authorList>
            <person name="Yoh S.M."/>
            <person name="Lucas J.S."/>
            <person name="Jones K.A."/>
        </authorList>
    </citation>
    <scope>INTERACTION WITH SUPT6H</scope>
</reference>
<reference key="10">
    <citation type="journal article" date="2009" name="Immunity">
        <title>The phagosomal proteome in interferon-gamma-activated macrophages.</title>
        <authorList>
            <person name="Trost M."/>
            <person name="English L."/>
            <person name="Lemieux S."/>
            <person name="Courcelles M."/>
            <person name="Desjardins M."/>
            <person name="Thibault P."/>
        </authorList>
    </citation>
    <scope>IDENTIFICATION BY MASS SPECTROMETRY [LARGE SCALE ANALYSIS]</scope>
</reference>
<reference key="11">
    <citation type="journal article" date="2010" name="Cell">
        <title>A tissue-specific atlas of mouse protein phosphorylation and expression.</title>
        <authorList>
            <person name="Huttlin E.L."/>
            <person name="Jedrychowski M.P."/>
            <person name="Elias J.E."/>
            <person name="Goswami T."/>
            <person name="Rad R."/>
            <person name="Beausoleil S.A."/>
            <person name="Villen J."/>
            <person name="Haas W."/>
            <person name="Sowa M.E."/>
            <person name="Gygi S.P."/>
        </authorList>
    </citation>
    <scope>PHOSPHORYLATION [LARGE SCALE ANALYSIS] AT SER-1847; SER-1849; THR-1854; SER-1857; TYR-1874; SER-1878; SER-1882; THR-1894; SER-1899; TYR-1909; THR-1912; SER-1913; SER-1917; SER-1920; TYR-1923; THR-1926; SER-1927; SER-1931 AND SER-1934</scope>
    <scope>IDENTIFICATION BY MASS SPECTROMETRY [LARGE SCALE ANALYSIS]</scope>
    <source>
        <tissue>Brain</tissue>
        <tissue>Brown adipose tissue</tissue>
        <tissue>Heart</tissue>
        <tissue>Kidney</tissue>
        <tissue>Liver</tissue>
        <tissue>Lung</tissue>
        <tissue>Pancreas</tissue>
        <tissue>Spleen</tissue>
        <tissue>Testis</tissue>
    </source>
</reference>
<reference key="12">
    <citation type="journal article" date="2012" name="Science">
        <title>Feedback regulation of transcriptional termination by the mammalian circadian clock PERIOD complex.</title>
        <authorList>
            <person name="Padmanabhan K."/>
            <person name="Robles M.S."/>
            <person name="Westerling T."/>
            <person name="Weitz C.J."/>
        </authorList>
    </citation>
    <scope>IDENTIFICATION IN A LARGE PER COMPLEX</scope>
</reference>
<reference key="13">
    <citation type="journal article" date="2013" name="Mol. Cell">
        <title>Acetylation of RNA polymerase II regulates growth-factor-induced gene transcription in mammalian cells.</title>
        <authorList>
            <person name="Schroeder S."/>
            <person name="Herker E."/>
            <person name="Itzen F."/>
            <person name="He D."/>
            <person name="Thomas S."/>
            <person name="Gilchrist D.A."/>
            <person name="Kaehlcke K."/>
            <person name="Cho S."/>
            <person name="Pollard K.S."/>
            <person name="Capra J.A."/>
            <person name="Schnoelzer M."/>
            <person name="Cole P.A."/>
            <person name="Geyer M."/>
            <person name="Bruneau B.G."/>
            <person name="Adelman K."/>
            <person name="Ott M."/>
        </authorList>
    </citation>
    <scope>FUNCTION</scope>
    <scope>ACETYLATION BY EP300</scope>
    <scope>MUTAGENESIS OF LYS-1838; LYS-1859; LYS-1866; LYS-1873; LYS-1887; LYS-1908; LYS-1922 AND LYS-1936</scope>
    <scope>SUBCELLULAR LOCATION</scope>
</reference>
<reference key="14">
    <citation type="journal article" date="2015" name="Elife">
        <title>Methylation of RNA polymerase II non-consensus Lysine residues marks early transcription in mammalian cells.</title>
        <authorList>
            <person name="Dias J.D."/>
            <person name="Rito T."/>
            <person name="Torlai Triglia E."/>
            <person name="Kukalev A."/>
            <person name="Ferrai C."/>
            <person name="Chotalia M."/>
            <person name="Brookes E."/>
            <person name="Kimura H."/>
            <person name="Pombo A."/>
        </authorList>
    </citation>
    <scope>METHYLATION AT LYS-1838; LYS-1859; LYS-1866; LYS-1873; LYS-1887; LYS-1908; LYS-1922 AND LYS-1936</scope>
    <scope>ACETYLATION</scope>
    <scope>MUTAGENESIS OF LYS-1838; LYS-1859; LYS-1866; LYS-1873; LYS-1887; LYS-1908; LYS-1922 AND LYS-1936</scope>
    <scope>FUNCTION</scope>
    <scope>SUBCELLULAR LOCATION</scope>
</reference>
<reference key="15">
    <citation type="journal article" date="2020" name="Cell">
        <title>Ubiquitination of DNA Damage-Stalled RNAPII Promotes Transcription-Coupled Repair.</title>
        <authorList>
            <person name="Nakazawa Y."/>
            <person name="Hara Y."/>
            <person name="Oka Y."/>
            <person name="Komine O."/>
            <person name="van den Heuvel D."/>
            <person name="Guo C."/>
            <person name="Daigaku Y."/>
            <person name="Isono M."/>
            <person name="He Y."/>
            <person name="Shimada M."/>
            <person name="Kato K."/>
            <person name="Jia N."/>
            <person name="Hashimoto S."/>
            <person name="Kotani Y."/>
            <person name="Miyoshi Y."/>
            <person name="Tanaka M."/>
            <person name="Sobue A."/>
            <person name="Mitsutake N."/>
            <person name="Suganami T."/>
            <person name="Masuda A."/>
            <person name="Ohno K."/>
            <person name="Nakada S."/>
            <person name="Mashimo T."/>
            <person name="Yamanaka K."/>
            <person name="Luijsterburg M.S."/>
            <person name="Ogi T."/>
        </authorList>
    </citation>
    <scope>MUTAGENESIS OF LYS-1268</scope>
</reference>
<reference key="16">
    <citation type="journal article" date="2008" name="BMC Genomics">
        <title>All and only CpG containing sequences are enriched in promoters abundantly bound by RNA polymerase II in multiple tissues.</title>
        <authorList>
            <person name="Rozenberg J.M."/>
            <person name="Shlyakhtenko A."/>
            <person name="Glass K."/>
            <person name="Rishi V."/>
            <person name="Myakishev M.V."/>
            <person name="FitzGerald P.C."/>
            <person name="Vinson C."/>
        </authorList>
    </citation>
    <scope>FUNCTION</scope>
</reference>
<comment type="function">
    <text evidence="1 3 7 10 11">Catalytic core component of RNA polymerase II (Pol II), a DNA-dependent RNA polymerase which synthesizes mRNA precursors and many functional non-coding RNAs using the four ribonucleoside triphosphates as substrates (By similarity). Pol II-mediated transcription cycle proceeds through transcription initiation, transcription elongation and transcription termination stages. During transcription initiation, Pol II pre-initiation complex (PIC) is recruited to DNA promoters, with focused-type promoters containing either the initiator (Inr) element, or the TATA-box found in cell-type specific genes and dispersed-type promoters that often contain hypomethylated CpG islands usually found in housekeeping genes. Once the polymerase has escaped from the promoter it enters the elongation phase during which RNA is actively polymerized, based on complementarity with the template DNA strand. Transcription termination involves the release of the RNA transcript and polymerase from the DNA (By similarity) (PubMed:18252004, PubMed:24207025). Forms Pol II active center together with the second largest subunit POLR2B/RPB2. Appends one nucleotide at a time to the 3' end of the nascent RNA, with POLR2A/RPB1 most likely contributing a Mg(2+)-coordinating DxDGD motif, and POLR2B/RPB2 participating in the coordination of a second Mg(2+) ion and providing lysine residues believed to facilitate Watson-Crick base pairing between the incoming nucleotide and template base. Typically, Mg(2+) ions direct a 5' nucleoside triphosphate to form a phosphodiester bond with the 3' hydroxyl of the preceding nucleotide of the nascent RNA, with the elimination of pyrophosphate. The reversible pyrophosphorolysis can occur at high pyrophosphate concentrations (By similarity). Can proofread the nascent RNA transcript by means of a 3' -&gt; 5' exonuclease activity. If a ribonucleotide is mis-incorporated, backtracks along the template DNA and cleaves the phosphodiester bond releasing the mis-incorporated 5'-ribonucleotide (By similarity). Through its unique C-terminal domain (CTD, 52 heptapeptide tandem repeats) serves as a platform for assembly of factors that regulate transcription initiation, elongation and termination. CTD phosphorylation on Ser-5 mediates Pol II promoter escape, whereas phosphorylation on Ser-2 is required for Pol II pause release during transcription elongation and further pre-mRNA processing. Additionally, the regulation of gene expression levels depends on the balance between methylation and acetylation levels of the CTD-lysines. Initiation or early elongation steps of transcription of growth-factor-induced immediate early genes are regulated by the acetylation status of the CTD. Methylation and dimethylation have a repressive effect on target genes expression. Cooperates with mRNA splicing machinery in co-transcriptional 5'-end capping and co-transcriptional splicing of pre-mRNA (By similarity) (PubMed:24207025, PubMed:26687004).</text>
</comment>
<comment type="function">
    <text evidence="3">RNA-dependent RNA polymerase that catalyzes the extension of a non-coding RNA (ncRNA) at the 3'-end using the four ribonucleoside triphosphates as substrates. An internal ncRNA sequence near the 3'-end serves as a template in a single-round Pol II-mediated RNA polymerization reaction. May decrease the stability of ncRNAs that repress Pol II-mediated gene transcription.</text>
</comment>
<comment type="catalytic activity">
    <reaction evidence="3">
        <text>RNA(n) + a ribonucleoside 5'-triphosphate = RNA(n+1) + diphosphate</text>
        <dbReference type="Rhea" id="RHEA:21248"/>
        <dbReference type="Rhea" id="RHEA-COMP:14527"/>
        <dbReference type="Rhea" id="RHEA-COMP:17342"/>
        <dbReference type="ChEBI" id="CHEBI:33019"/>
        <dbReference type="ChEBI" id="CHEBI:61557"/>
        <dbReference type="ChEBI" id="CHEBI:140395"/>
        <dbReference type="EC" id="2.7.7.6"/>
    </reaction>
    <physiologicalReaction direction="left-to-right" evidence="3">
        <dbReference type="Rhea" id="RHEA:21249"/>
    </physiologicalReaction>
    <physiologicalReaction direction="right-to-left" evidence="3">
        <dbReference type="Rhea" id="RHEA:21250"/>
    </physiologicalReaction>
</comment>
<comment type="catalytic activity">
    <reaction evidence="3">
        <text>RNA(n) + a ribonucleoside 5'-triphosphate = RNA(n+1) + diphosphate</text>
        <dbReference type="Rhea" id="RHEA:21248"/>
        <dbReference type="Rhea" id="RHEA-COMP:14527"/>
        <dbReference type="Rhea" id="RHEA-COMP:17342"/>
        <dbReference type="ChEBI" id="CHEBI:33019"/>
        <dbReference type="ChEBI" id="CHEBI:61557"/>
        <dbReference type="ChEBI" id="CHEBI:140395"/>
        <dbReference type="EC" id="2.7.7.48"/>
    </reaction>
    <physiologicalReaction direction="left-to-right" evidence="3">
        <dbReference type="Rhea" id="RHEA:21249"/>
    </physiologicalReaction>
</comment>
<comment type="catalytic activity">
    <reaction evidence="3">
        <text>a 3'-end ribonucleotidyl-ribonucleotide-RNA + H2O = a 3'-end ribonucleotide-RNA + a ribonucleoside 5'-phosphate + H(+)</text>
        <dbReference type="Rhea" id="RHEA:77763"/>
        <dbReference type="Rhea" id="RHEA-COMP:17428"/>
        <dbReference type="Rhea" id="RHEA-COMP:18982"/>
        <dbReference type="ChEBI" id="CHEBI:15377"/>
        <dbReference type="ChEBI" id="CHEBI:15378"/>
        <dbReference type="ChEBI" id="CHEBI:58043"/>
        <dbReference type="ChEBI" id="CHEBI:74896"/>
        <dbReference type="ChEBI" id="CHEBI:197502"/>
    </reaction>
    <physiologicalReaction direction="left-to-right" evidence="3">
        <dbReference type="Rhea" id="RHEA:77764"/>
    </physiologicalReaction>
</comment>
<comment type="cofactor">
    <cofactor evidence="3">
        <name>Mg(2+)</name>
        <dbReference type="ChEBI" id="CHEBI:18420"/>
    </cofactor>
    <text evidence="3">Two Mg(2+) ions are coordinated by both the catalytic residues and the nucleic acid substrate to enhance substrate recognition and catalytic efficiency.</text>
</comment>
<comment type="subunit">
    <text evidence="3 5 6 8 9 13 14">Component of the RNA polymerase II (Pol II) core complex consisting of 12 subunits: a ten-subunit catalytic core composed of POLR2A/RPB1, POLR2B/RPB2, POLR2C/RPB3, POLR2I/RPB9, POLR2J/RPB11, POLR2E/RPABC1, POLR2F/RPABC2, POLR2H/RPABC3, POLR2K/RPABC4 and POLR2L/RPABC5 and a mobile stalk composed of two subunits POLR2D/RPB4 and POLR2G/RPB7, protruding from the core and functioning primarily in transcription initiation. Part of Pol II(G) complex, in which Pol II core associates with an additional subunit POLR2M; unlike conventional Pol II, Pol II(G) functions as a transcriptional repressor. Part of TBP-based Pol II pre-initiation complex (PIC), in which Pol II core assembles with general transcription factors and other specific initiation factors including GTF2E1, GTF2E2, GTF2F1, GTF2F2, TCEA1, ERCC2, ERCC3, GTF2H2, GTF2H3, GTF2H4, GTF2H5, GTF2A1, GTF2A2, GTF2B and TBP; this large multi-subunit PIC complex mediates DNA unwinding and targets Pol II core to the transcription start site where the first phosphodiester bond forms (By similarity). Component of a complex which is at least composed of HTATSF1/Tat-SF1, the P-TEFb complex components CDK9 and CCNT1, RNA polymerase II, SUPT5H, and NCL/nucleolin (PubMed:19141475). The large PER complex involved in the repression of transcriptional termination is composed of at least PER2, CDK9, DDX5, DHX9, NCBP1 and POLR2A (active) (PubMed:22767893). Interacts (via the C-terminal domain (CTD)) with U2AF2; recruits PRPF19 and the Prp19 complex to the pre-mRNA and may couple transcription to pre-mRNA splicing. Interacts (via the C-terminal domain (CTD)) with SMN1/SMN2; recruits SMN1/SMN2 to RNA Pol II elongation complexes. Interacts via the phosphorylated C-terminal domain with WDR82 and with SETD1A and SETD1B only in the presence of WDR82. When phosphorylated at 'Ser-5', interacts with MEN1; the unphosphorylated form, or phosphorylated at 'Ser-2' does not interact. When phosphorylated at 'Ser-5', interacts with ZMYND8; the form phosphorylated at 'Ser-2' does not interact. When phosphorylated at 'Ser-2', interacts with SUPT6H (via SH2 domain). Interacts with RECQL5 and TCEA1; binding of RECQL5 prevents TCEA1 binding. The phosphorylated C-terminal domain interacts with FNBP3 and SYNCRIP. Interacts with ATF7IP. Interacts with DDX5 (By similarity). Interacts with WWP2 (PubMed:17526739). Interacts with SETX. Interacts (phosphorylated) with PIH1D1. Interacts (via the C-terminal domain (CTD)) with TDRD3. Interacts with PRMT5. Interacts with XRN2. Interacts with SAFB/SAFB1 (By similarity). Interacts with CCNL1 (Probable). Interacts with CCNL2 (By similarity). Interacts with MYO1C (PubMed:11030652). Interacts with PAF1 (By similarity). Interacts with SFRS19 (By similarity). Interacts (via C-terminus) with CMTR1 (By similarity). Interacts (via C-terminus) with CTDSP1 (By similarity). Interacts (via C-terminus) with SCAF8 (PubMed:8692929). Interacts (via the C-terminal domain (CTD)) with CCNT2. Interacts with FUS (By similarity). Interacts with MCM3AP. Interacts with kinase SRPK2; the interaction occurs during the co-transcriptional formation of inappropriate R-loops (By similarity). Interacts with SETD2 (By similarity). Interacts with UVSSA (By similarity). Interacts with ERCC6 (By similarity). Interacts with the TFIIH complex (By similarity). Interacts (via the C-terminal domain) with IVNS1ABP (via Kelch repeats) (By similarity).</text>
</comment>
<comment type="interaction">
    <interactant intactId="EBI-2549849">
        <id>P08775</id>
    </interactant>
    <interactant intactId="EBI-2550360">
        <id>Q6PDM2</id>
        <label>Srsf1</label>
    </interactant>
    <organismsDiffer>false</organismsDiffer>
    <experiments>2</experiments>
</comment>
<comment type="interaction">
    <interactant intactId="EBI-2549849">
        <id>P08775</id>
    </interactant>
    <interactant intactId="EBI-2550402">
        <id>Q62093</id>
        <label>Srsf2</label>
    </interactant>
    <organismsDiffer>false</organismsDiffer>
    <experiments>3</experiments>
</comment>
<comment type="subcellular location">
    <subcellularLocation>
        <location evidence="10 11">Nucleus</location>
    </subcellularLocation>
    <subcellularLocation>
        <location evidence="3">Cytoplasm</location>
    </subcellularLocation>
    <subcellularLocation>
        <location evidence="3">Chromosome</location>
    </subcellularLocation>
    <text evidence="3">Hypophosphorylated form is mainly found in the cytoplasm, while the hyperphosphorylated and active form is nuclear. Co-localizes with kinase SRPK2 and helicase DDX23 at chromatin loci where unscheduled R-loops form.</text>
</comment>
<comment type="domain">
    <text evidence="3">The C-terminal domain (CTD) serves as a platform for assembly of factors that regulate transcription initiation, elongation, termination and mRNA processing.</text>
</comment>
<comment type="domain">
    <text evidence="1">The trigger loop allows entry of NTPs into the active site, switching between an open and closed state with each NTP addition cycle.</text>
</comment>
<comment type="domain">
    <text evidence="1">The bridging helix crosses the cleft near the catalytic site and is thought to promote polymerase translocation by acting as a ratchet that moves the DNA-RNA hybrid through the active site.</text>
</comment>
<comment type="PTM">
    <text evidence="3">The tandem heptapeptide repeats in the C-terminal domain (CTD) can be highly phosphorylated. The phosphorylation activates Pol II. Phosphorylation occurs mainly at residues 'Ser-2' and 'Ser-5' of the heptapeptide repeat and is mediated, at least, by CDK7 and CDK9. POLR2A associated with DNA is specifically phosphorylated at 'Ser-5' of the CTD by CDK7, promoting transcription initiation by triggering dissociation from DNA. Phosphorylated at 'Ser-2', Ser-5' and 'Ser-7' of the CTD by CDK9 (P-TEFb complex), promoting transcription elongation. Phosphorylation also takes place at 'Ser-7' of the heptapeptide repeat, which is required for efficient transcription of snRNA genes and processing of the transcripts. The phosphorylation state is believed to result from the balanced action of site-specific CTD kinases and phosphatases, and a 'CTD code' that specifies the position of Pol II within the transcription cycle has been proposed. Dephosphorylated by the INTAC complex when transcripts are unfavorably configured for transcriptional elongation, leading to premature transcription termination: dephosphorylation is mediated by the PPP2CA component of the INTAC complex. In response to replication stress, dephosphorylated at 'Ser-5' of the CTD by the PNUTS-PP1 complex, promoting RNA polymerase II degradation. Dephosphorylated by the protein phosphatase CTDSP1. Dephosphorylated at 'Ser-2' following UV irradiation.</text>
</comment>
<comment type="PTM">
    <text evidence="10 11">Among tandem heptapeptide repeats of the C-terminal domain (CTD) some do not match the Y-S-P-T-S-P-S consensus, the seventh serine residue 'Ser-7' being replaced by a lysine. 'Lys-7' in these non-consensus heptapeptide repeats can be alternatively acetylated, methylated and dimethylated. EP300 is one of the enzyme able to acetylate 'Lys-7'. Acetylation at 'Lys-7' of non-consensus heptapeptide repeats is associated with 'Ser-2' phosphorylation and active transcription. It may regulate initiation or early elongation steps of transcription specially for inducible genes.</text>
</comment>
<comment type="PTM">
    <text evidence="3 6">Following transcription stress, the elongating form of RNA polymerase II (RNA pol IIo) is ubiquitinated by the DCX(ERCC8) complex (also named CSA complex) on Lys-1268 at DNA damage sites without leading to degradation: ubiquitination promotes RNA pol IIo backtracking to allow access by the transcription-coupled nucleotide excision repair (TC-NER) machinery (By similarity). At stalled RNA pol II where TC-NER has failed, RBX1-mediated polybiquitination at Lys-1268 may lead to proteasome-mediated degradation in a UBAP2- and UBAP2L-dependent manner; presumably to halt global transcription and enable 'last resort' DNA repair pathways (By similarity). Ubiquitinated by the BCR(ARMC5) complex when transcripts are unfavorably configured for transcriptional elongation: the BCR(ARMC5) complex specifically catalyzes ubiquitination of POLR2A phosphorylated at 'Ser-5' of the C-terminal domain (CTD), leading to POLR2A degradation (By similarity). Ubiquitination by the BCR(ARMC5) complex takes place at residues distinct from Lys-1268 (By similarity). Ubiquitinated by WWP2 leading to proteasomal degradation (PubMed:17526739).</text>
</comment>
<comment type="PTM">
    <text evidence="3 11">Methylated at Arg-1810 prior to transcription initiation when the CTD is hypophosphorylated, phosphorylation at Ser-1805 and Ser-1808 preventing this methylation. Symmetrically or asymmetrically dimethylated at Arg-1810 by PRMT5 and CARM1 respectively. Symmetric or asymmetric dimethylation modulates interactions with CTD-binding proteins like SMN1/SMN2 and TDRD3. SMN1/SMN2 interacts preferentially with the symmetrically dimethylated form while TDRD3 interacts with the asymmetric form. Through the recruitment of SMN1/SMN2, symmetric dimethylation is required for resolving RNA-DNA hybrids created by RNA polymerase II, that form R-loop in transcription terminal regions, an important step in proper transcription termination. CTD dimethylation may also facilitate the expression of select RNAs. Among tandem heptapeptide repeats of the C-terminal domain (CTD) some do not match the Y-S-P-T-S-P-S consensus, the seventh serine residue 'Ser-7' being replaced by a lysine. 'Lys-7' in these non-consensus heptapeptide repeats can be alternatively acetylated, methylated, dimethylated and trimethylated. Methylation occurs in the earliest transcription stages and precedes or is concomitant to 'Ser-5' and 'Ser-7' phosphorylation. Dimethylation and trimehtylation at 'Lys-7' of non-consensus heptapeptide repeats are exclusively associated with phosphorylated CTD.</text>
</comment>
<comment type="similarity">
    <text evidence="14">Belongs to the RNA polymerase beta' chain family.</text>
</comment>
<proteinExistence type="evidence at protein level"/>
<sequence length="1970" mass="217176">MHGGGPPSGDSACPLRTIKRVQFGVLSPDELKRMSVTEGGIKYPETTEGGRPKLGGLMDPRQGVIERTGRCQTCAGNMTECPGHFGHIELAKPVFHVGFLVKTMKVLRCVCFFCSKLLVDSNNPKIKDILAKSKGQPKKRLTHVYDLCKGKNICEGGEEMDNKFGVEQPEGDEDLTKEKGHGGCGRYQPRIRRSGLELYAEWKHVNEDSQEKKILLSPERVHEIFKRISDEECFVLGMEPRYARPEWMIVTVLPVPPLSVRPAVVMQGSARNQDDLTHKLADIVKINNQLRRNEQNGAAAHVIAEDVKLLQFHVATMVDNELPGLPRAMQKSGRPLKSLKQRLKGKEGRVRGNLMGKRVDFSARTVITPDPNLSIDQVGVPRSIAANMTFAEIVTPFNIDRLQELVRRGNSQYPGAKYIIRDNGDRIDLRFHPKPSDLHLQTGYKVERHMCDGDIVIFNRQPTLHKMSMMGHRVRILPWSTFRLNLSVTTPYNADFDGDEMNLHLPQSLETRAEIQELAMVPRMIVTPQSNRPVMGIVQDTLTAVRKFTKRDVFLERGEVMNLLMFLSTWDGKVPQPAILKPRPLWTGKQIFSLIIPGHINCIRTHSTHPDDEDSGPYKHISPGDTKVVVENGELIMGILCKKSLGTSAGSLVHISYLEMGHDITRLFYSNIQTVINNWLLIEGHTIGIGDSIADSKTYQDIQNTIKKAKQDVIEVIEKAHNNELEPTPGNTLRQTFENQVNRILNDARDKTGSSAQKSLSEYNNFKSMVVSGAKGSKINISQVIAVVGQQNVEGKRIPFGFKHRTLPHFIKDDYGPESRGFVENSYLAGLTPTEFFFHAMGGREGLIDTAVKTAETGYIQRRLIKSMESVMVKYDATVRNSINQVVQLRYGEDGLAGESVEFQNLATLKPSNKAFEKKFRFDYTNERALRRTLQEDLVKDVLSNAHIQNELEREFERMREDREVLRVIFPTGDSKVVLPCNLLRMIWNAQKIFHINPRLPSDLHPIKVVEGVKELSKKLVIVNGDDPLSRQAQENATLLFNIHLRSTLCSRRMAEEFRLSGEAFDWLLGEIESKFNQAIAHPGEMVGALAAQSLGEPATQMTLNTFHYAGVSAKNVTLGVPRLKELINISKKPKTPSLTVFLLGQSARDAERAKDILCRLEHTTLRKVTANTAIYYDPNPQSTVVAEDQEWVNVYYEMPDFDVARISPWLLRVELDRKHMTDRKLTMEQIAEKINAGFGDDLNCIFNDDNAEKLVLRIRIMNSDENKMQEEEEVVDKMDDDVFLRCIESNMLTDMTLQGIEQISKVYMHLPQTDNKKKIIITEDGEFKALQEWILETDGVSLMRVLSEKDVDPVRTTSNDIVEIFTVLGIEAVRKALERELYHVISFDGSYVNYRHLALLCDTMTCRGHLMAITRHGVNRQDTGPLMKCSFEETVDVLMEAAAHGESDPMKGVSENIMLGQLAPAGTGCFDLLLDAEKCKYGMEIPTNIPGLGAAGPTGMFFGSAPSPMGGISPAMTPWNQGATPAYGAWSPSVGSGMTPGAAGFSPSAASDASGFSPGYSPAWSPTPGSPGSPGPSSPYIPSPGGAMSPSYSPTSPAYEPRSPGGYTPQSPSYSPTSPSYSPTSPSYSPTSPNYSPTSPSYSPTSPSYSPTSPSYSPTSPSYSPTSPSYSPTSPSYSPTSPSYSPTSPSYSPTSPSYSPTSPSYSPTSPSYSPTSPSYSPTSPSYSPTSPSYSPTSPSYSPTSPNYSPTSPNYTPTSPSYSPTSPSYSPTSPNYTPTSPNYSPTSPSYSPTSPSYSPTSPSYSPSSPRYTPQSPTYTPSSPSYSPSSPSYSPTSPKYTPTSPSYSPSSPEYTPASPKYSPTSPKYSPTSPKYSPTSPTYSPTTPKYSPTSPTYSPTSPVYTPTSPKYSPTSPTYSPTSPKYSPTSPTYSPTSPKGSTYSPTSPGYSPTSPTYSLTSPAISPDDSDEEN</sequence>
<accession>P08775</accession>
<accession>Q5F298</accession>
<name>RPB1_MOUSE</name>
<feature type="chain" id="PRO_0000073941" description="DNA-directed RNA polymerase II subunit RPB1">
    <location>
        <begin position="1"/>
        <end position="1970"/>
    </location>
</feature>
<feature type="repeat" description="1">
    <location>
        <begin position="1593"/>
        <end position="1599"/>
    </location>
</feature>
<feature type="repeat" description="2; approximate">
    <location>
        <begin position="1600"/>
        <end position="1606"/>
    </location>
</feature>
<feature type="repeat" description="3">
    <location>
        <begin position="1608"/>
        <end position="1614"/>
    </location>
</feature>
<feature type="repeat" description="4">
    <location>
        <begin position="1615"/>
        <end position="1621"/>
    </location>
</feature>
<feature type="repeat" description="5">
    <location>
        <begin position="1622"/>
        <end position="1628"/>
    </location>
</feature>
<feature type="repeat" description="6">
    <location>
        <begin position="1629"/>
        <end position="1635"/>
    </location>
</feature>
<feature type="repeat" description="7">
    <location>
        <begin position="1636"/>
        <end position="1642"/>
    </location>
</feature>
<feature type="repeat" description="8">
    <location>
        <begin position="1643"/>
        <end position="1649"/>
    </location>
</feature>
<feature type="repeat" description="9">
    <location>
        <begin position="1650"/>
        <end position="1656"/>
    </location>
</feature>
<feature type="repeat" description="10">
    <location>
        <begin position="1657"/>
        <end position="1663"/>
    </location>
</feature>
<feature type="repeat" description="11">
    <location>
        <begin position="1664"/>
        <end position="1670"/>
    </location>
</feature>
<feature type="repeat" description="12">
    <location>
        <begin position="1671"/>
        <end position="1677"/>
    </location>
</feature>
<feature type="repeat" description="13">
    <location>
        <begin position="1678"/>
        <end position="1684"/>
    </location>
</feature>
<feature type="repeat" description="14">
    <location>
        <begin position="1685"/>
        <end position="1691"/>
    </location>
</feature>
<feature type="repeat" description="15">
    <location>
        <begin position="1692"/>
        <end position="1698"/>
    </location>
</feature>
<feature type="repeat" description="16">
    <location>
        <begin position="1699"/>
        <end position="1705"/>
    </location>
</feature>
<feature type="repeat" description="17">
    <location>
        <begin position="1706"/>
        <end position="1712"/>
    </location>
</feature>
<feature type="repeat" description="18">
    <location>
        <begin position="1713"/>
        <end position="1719"/>
    </location>
</feature>
<feature type="repeat" description="19">
    <location>
        <begin position="1720"/>
        <end position="1726"/>
    </location>
</feature>
<feature type="repeat" description="20">
    <location>
        <begin position="1727"/>
        <end position="1733"/>
    </location>
</feature>
<feature type="repeat" description="21">
    <location>
        <begin position="1734"/>
        <end position="1740"/>
    </location>
</feature>
<feature type="repeat" description="22">
    <location>
        <begin position="1741"/>
        <end position="1747"/>
    </location>
</feature>
<feature type="repeat" description="23">
    <location>
        <begin position="1748"/>
        <end position="1754"/>
    </location>
</feature>
<feature type="repeat" description="24">
    <location>
        <begin position="1755"/>
        <end position="1761"/>
    </location>
</feature>
<feature type="repeat" description="25">
    <location>
        <begin position="1762"/>
        <end position="1768"/>
    </location>
</feature>
<feature type="repeat" description="26">
    <location>
        <begin position="1769"/>
        <end position="1775"/>
    </location>
</feature>
<feature type="repeat" description="27">
    <location>
        <begin position="1776"/>
        <end position="1782"/>
    </location>
</feature>
<feature type="repeat" description="28">
    <location>
        <begin position="1783"/>
        <end position="1789"/>
    </location>
</feature>
<feature type="repeat" description="29">
    <location>
        <begin position="1790"/>
        <end position="1796"/>
    </location>
</feature>
<feature type="repeat" description="30">
    <location>
        <begin position="1797"/>
        <end position="1803"/>
    </location>
</feature>
<feature type="repeat" description="31">
    <location>
        <begin position="1804"/>
        <end position="1810"/>
    </location>
</feature>
<feature type="repeat" description="32">
    <location>
        <begin position="1811"/>
        <end position="1817"/>
    </location>
</feature>
<feature type="repeat" description="33">
    <location>
        <begin position="1818"/>
        <end position="1824"/>
    </location>
</feature>
<feature type="repeat" description="34">
    <location>
        <begin position="1825"/>
        <end position="1831"/>
    </location>
</feature>
<feature type="repeat" description="35">
    <location>
        <begin position="1832"/>
        <end position="1838"/>
    </location>
</feature>
<feature type="repeat" description="36">
    <location>
        <begin position="1839"/>
        <end position="1845"/>
    </location>
</feature>
<feature type="repeat" description="37">
    <location>
        <begin position="1846"/>
        <end position="1852"/>
    </location>
</feature>
<feature type="repeat" description="38">
    <location>
        <begin position="1853"/>
        <end position="1859"/>
    </location>
</feature>
<feature type="repeat" description="39">
    <location>
        <begin position="1860"/>
        <end position="1866"/>
    </location>
</feature>
<feature type="repeat" description="40">
    <location>
        <begin position="1867"/>
        <end position="1873"/>
    </location>
</feature>
<feature type="repeat" description="41">
    <location>
        <begin position="1874"/>
        <end position="1880"/>
    </location>
</feature>
<feature type="repeat" description="42">
    <location>
        <begin position="1881"/>
        <end position="1887"/>
    </location>
</feature>
<feature type="repeat" description="43">
    <location>
        <begin position="1888"/>
        <end position="1894"/>
    </location>
</feature>
<feature type="repeat" description="44">
    <location>
        <begin position="1895"/>
        <end position="1901"/>
    </location>
</feature>
<feature type="repeat" description="45">
    <location>
        <begin position="1902"/>
        <end position="1908"/>
    </location>
</feature>
<feature type="repeat" description="46">
    <location>
        <begin position="1909"/>
        <end position="1915"/>
    </location>
</feature>
<feature type="repeat" description="47">
    <location>
        <begin position="1916"/>
        <end position="1922"/>
    </location>
</feature>
<feature type="repeat" description="48">
    <location>
        <begin position="1923"/>
        <end position="1929"/>
    </location>
</feature>
<feature type="repeat" description="49">
    <location>
        <begin position="1930"/>
        <end position="1936"/>
    </location>
</feature>
<feature type="repeat" description="50">
    <location>
        <begin position="1940"/>
        <end position="1946"/>
    </location>
</feature>
<feature type="repeat" description="51; approximate">
    <location>
        <begin position="1947"/>
        <end position="1953"/>
    </location>
</feature>
<feature type="repeat" description="52; approximate">
    <location>
        <begin position="1954"/>
        <end position="1960"/>
    </location>
</feature>
<feature type="region of interest" description="Bridging helix" evidence="1">
    <location>
        <begin position="832"/>
        <end position="873"/>
    </location>
</feature>
<feature type="region of interest" description="Trigger loop" evidence="1">
    <location>
        <begin position="1083"/>
        <end position="1124"/>
    </location>
</feature>
<feature type="region of interest" description="Disordered" evidence="4">
    <location>
        <begin position="1546"/>
        <end position="1970"/>
    </location>
</feature>
<feature type="region of interest" description="C-terminal domain (CTD); 52 X 7 AA approximate tandem repeats of Y-[ST]-P-[STQ]-[ST]-P-[SRNTEVKGN]">
    <location>
        <begin position="1593"/>
        <end position="1960"/>
    </location>
</feature>
<feature type="compositionally biased region" description="Low complexity" evidence="4">
    <location>
        <begin position="1546"/>
        <end position="1568"/>
    </location>
</feature>
<feature type="compositionally biased region" description="Pro residues" evidence="4">
    <location>
        <begin position="1569"/>
        <end position="1583"/>
    </location>
</feature>
<feature type="compositionally biased region" description="Low complexity" evidence="4">
    <location>
        <begin position="1608"/>
        <end position="1959"/>
    </location>
</feature>
<feature type="binding site" evidence="1">
    <location>
        <position position="67"/>
    </location>
    <ligand>
        <name>RNA</name>
        <dbReference type="ChEBI" id="CHEBI:33697"/>
    </ligand>
</feature>
<feature type="binding site" evidence="3">
    <location>
        <position position="71"/>
    </location>
    <ligand>
        <name>Zn(2+)</name>
        <dbReference type="ChEBI" id="CHEBI:29105"/>
        <label>1</label>
    </ligand>
</feature>
<feature type="binding site" evidence="3">
    <location>
        <position position="74"/>
    </location>
    <ligand>
        <name>Zn(2+)</name>
        <dbReference type="ChEBI" id="CHEBI:29105"/>
        <label>1</label>
    </ligand>
</feature>
<feature type="binding site" evidence="3">
    <location>
        <position position="81"/>
    </location>
    <ligand>
        <name>Zn(2+)</name>
        <dbReference type="ChEBI" id="CHEBI:29105"/>
        <label>1</label>
    </ligand>
</feature>
<feature type="binding site" evidence="3">
    <location>
        <position position="84"/>
    </location>
    <ligand>
        <name>Zn(2+)</name>
        <dbReference type="ChEBI" id="CHEBI:29105"/>
        <label>1</label>
    </ligand>
</feature>
<feature type="binding site" evidence="3">
    <location>
        <position position="111"/>
    </location>
    <ligand>
        <name>Zn(2+)</name>
        <dbReference type="ChEBI" id="CHEBI:29105"/>
        <label>2</label>
    </ligand>
</feature>
<feature type="binding site" evidence="3">
    <location>
        <position position="114"/>
    </location>
    <ligand>
        <name>Zn(2+)</name>
        <dbReference type="ChEBI" id="CHEBI:29105"/>
        <label>2</label>
    </ligand>
</feature>
<feature type="binding site" evidence="3">
    <location>
        <position position="154"/>
    </location>
    <ligand>
        <name>Zn(2+)</name>
        <dbReference type="ChEBI" id="CHEBI:29105"/>
        <label>2</label>
    </ligand>
</feature>
<feature type="binding site" evidence="3">
    <location>
        <position position="184"/>
    </location>
    <ligand>
        <name>Zn(2+)</name>
        <dbReference type="ChEBI" id="CHEBI:29105"/>
        <label>2</label>
    </ligand>
</feature>
<feature type="binding site" evidence="1">
    <location>
        <position position="346"/>
    </location>
    <ligand>
        <name>DNA</name>
        <dbReference type="ChEBI" id="CHEBI:16991"/>
        <label>template strand</label>
    </ligand>
</feature>
<feature type="binding site" evidence="1">
    <location>
        <position position="358"/>
    </location>
    <ligand>
        <name>DNA</name>
        <dbReference type="ChEBI" id="CHEBI:16991"/>
        <label>template strand</label>
    </ligand>
</feature>
<feature type="binding site" evidence="1">
    <location>
        <position position="460"/>
    </location>
    <ligand>
        <name>RNA</name>
        <dbReference type="ChEBI" id="CHEBI:33697"/>
    </ligand>
</feature>
<feature type="binding site" evidence="3">
    <location>
        <position position="493"/>
    </location>
    <ligand>
        <name>Mg(2+)</name>
        <dbReference type="ChEBI" id="CHEBI:18420"/>
        <label>1</label>
        <note>catalytic</note>
    </ligand>
</feature>
<feature type="binding site" evidence="3">
    <location>
        <position position="495"/>
    </location>
    <ligand>
        <name>Mg(2+)</name>
        <dbReference type="ChEBI" id="CHEBI:18420"/>
        <label>1</label>
        <note>catalytic</note>
    </ligand>
</feature>
<feature type="binding site" evidence="3">
    <location>
        <position position="495"/>
    </location>
    <ligand>
        <name>Mg(2+)</name>
        <dbReference type="ChEBI" id="CHEBI:18420"/>
        <label>2</label>
        <note>ligand shared with POLR2B/RPB2</note>
    </ligand>
</feature>
<feature type="binding site" evidence="1">
    <location>
        <position position="497"/>
    </location>
    <ligand>
        <name>Mg(2+)</name>
        <dbReference type="ChEBI" id="CHEBI:18420"/>
        <label>1</label>
        <note>catalytic</note>
    </ligand>
</feature>
<feature type="binding site" evidence="2">
    <location>
        <position position="497"/>
    </location>
    <ligand>
        <name>Mg(2+)</name>
        <dbReference type="ChEBI" id="CHEBI:18420"/>
        <label>2</label>
        <note>ligand shared with POLR2B/RPB2</note>
    </ligand>
</feature>
<feature type="binding site" evidence="3">
    <location>
        <position position="499"/>
    </location>
    <ligand>
        <name>Mg(2+)</name>
        <dbReference type="ChEBI" id="CHEBI:18420"/>
        <label>1</label>
        <note>catalytic</note>
    </ligand>
</feature>
<feature type="binding site" evidence="1">
    <location>
        <position position="499"/>
    </location>
    <ligand>
        <name>RNA</name>
        <dbReference type="ChEBI" id="CHEBI:33697"/>
    </ligand>
</feature>
<feature type="binding site" evidence="1">
    <location>
        <position position="1416"/>
    </location>
    <ligand>
        <name>DNA</name>
        <dbReference type="ChEBI" id="CHEBI:16991"/>
        <label>template strand</label>
    </ligand>
</feature>
<feature type="binding site" evidence="1">
    <location>
        <position position="1421"/>
    </location>
    <ligand>
        <name>DNA</name>
        <dbReference type="ChEBI" id="CHEBI:16991"/>
        <label>nontemplate strand</label>
    </ligand>
</feature>
<feature type="modified residue" description="N-acetylmethionine" evidence="3">
    <location>
        <position position="1"/>
    </location>
</feature>
<feature type="modified residue" description="Phosphoserine" evidence="3">
    <location>
        <position position="27"/>
    </location>
</feature>
<feature type="modified residue" description="Phosphoserine" evidence="3">
    <location>
        <position position="217"/>
    </location>
</feature>
<feature type="modified residue" description="Omega-N-methylated arginine; by CARM1; in vitro" evidence="3">
    <location>
        <position position="1603"/>
    </location>
</feature>
<feature type="modified residue" description="Asymmetric dimethylarginine; alternate; by CARM1" evidence="3">
    <location>
        <position position="1810"/>
    </location>
</feature>
<feature type="modified residue" description="Symmetric dimethylarginine; alternate; by PRMT5" evidence="3">
    <location>
        <position position="1810"/>
    </location>
</feature>
<feature type="modified residue" description="N6,N6-dimethyllysine; alternate" evidence="15">
    <location>
        <position position="1838"/>
    </location>
</feature>
<feature type="modified residue" description="N6-methyllysine; alternate" evidence="15">
    <location>
        <position position="1838"/>
    </location>
</feature>
<feature type="modified residue" description="Phosphothreonine" evidence="3">
    <location>
        <position position="1840"/>
    </location>
</feature>
<feature type="modified residue" description="Phosphoserine" evidence="3">
    <location>
        <position position="1843"/>
    </location>
</feature>
<feature type="modified residue" description="Phosphoserine" evidence="3">
    <location>
        <position position="1845"/>
    </location>
</feature>
<feature type="modified residue" description="Phosphoserine" evidence="16">
    <location>
        <position position="1847"/>
    </location>
</feature>
<feature type="modified residue" description="Phosphoserine" evidence="16">
    <location>
        <position position="1849"/>
    </location>
</feature>
<feature type="modified residue" description="Phosphoserine" evidence="3">
    <location>
        <position position="1850"/>
    </location>
</feature>
<feature type="modified residue" description="Phosphothreonine" evidence="16">
    <location>
        <position position="1854"/>
    </location>
</feature>
<feature type="modified residue" description="Phosphoserine" evidence="16">
    <location>
        <position position="1857"/>
    </location>
</feature>
<feature type="modified residue" description="N6,N6-dimethyllysine; alternate" evidence="15">
    <location>
        <position position="1859"/>
    </location>
</feature>
<feature type="modified residue" description="N6-methyllysine; alternate" evidence="15">
    <location>
        <position position="1859"/>
    </location>
</feature>
<feature type="modified residue" description="Phosphotyrosine" evidence="3">
    <location>
        <position position="1860"/>
    </location>
</feature>
<feature type="modified residue" description="Phosphoserine" evidence="3">
    <location>
        <position position="1861"/>
    </location>
</feature>
<feature type="modified residue" description="Phosphothreonine" evidence="3">
    <location>
        <position position="1863"/>
    </location>
</feature>
<feature type="modified residue" description="Phosphoserine" evidence="3">
    <location>
        <position position="1864"/>
    </location>
</feature>
<feature type="modified residue" description="N6,N6,N6-trimethyllysine; alternate" evidence="3">
    <location>
        <position position="1866"/>
    </location>
</feature>
<feature type="modified residue" description="N6,N6-dimethyllysine; alternate" evidence="15">
    <location>
        <position position="1866"/>
    </location>
</feature>
<feature type="modified residue" description="N6-acetyllysine; alternate" evidence="3">
    <location>
        <position position="1866"/>
    </location>
</feature>
<feature type="modified residue" description="N6-methyllysine; alternate" evidence="15">
    <location>
        <position position="1866"/>
    </location>
</feature>
<feature type="modified residue" description="Phosphotyrosine" evidence="3">
    <location>
        <position position="1867"/>
    </location>
</feature>
<feature type="modified residue" description="Phosphoserine" evidence="3">
    <location>
        <position position="1868"/>
    </location>
</feature>
<feature type="modified residue" description="Phosphothreonine" evidence="3">
    <location>
        <position position="1870"/>
    </location>
</feature>
<feature type="modified residue" description="N6,N6,N6-trimethyllysine; alternate" evidence="3">
    <location>
        <position position="1873"/>
    </location>
</feature>
<feature type="modified residue" description="N6,N6-dimethyllysine; alternate" evidence="15">
    <location>
        <position position="1873"/>
    </location>
</feature>
<feature type="modified residue" description="N6-methyllysine; alternate" evidence="15">
    <location>
        <position position="1873"/>
    </location>
</feature>
<feature type="modified residue" description="Phosphotyrosine" evidence="16">
    <location>
        <position position="1874"/>
    </location>
</feature>
<feature type="modified residue" description="Phosphoserine" evidence="3">
    <location>
        <position position="1875"/>
    </location>
</feature>
<feature type="modified residue" description="Phosphothreonine" evidence="3">
    <location>
        <position position="1877"/>
    </location>
</feature>
<feature type="modified residue" description="Phosphoserine" evidence="16">
    <location>
        <position position="1878"/>
    </location>
</feature>
<feature type="modified residue" description="Phosphotyrosine" evidence="3">
    <location>
        <position position="1881"/>
    </location>
</feature>
<feature type="modified residue" description="Phosphoserine" evidence="16">
    <location>
        <position position="1882"/>
    </location>
</feature>
<feature type="modified residue" description="Phosphothreonine" evidence="3">
    <location>
        <position position="1885"/>
    </location>
</feature>
<feature type="modified residue" description="N6,N6-dimethyllysine; alternate" evidence="15">
    <location>
        <position position="1887"/>
    </location>
</feature>
<feature type="modified residue" description="N6-acetyllysine; alternate" evidence="3">
    <location>
        <position position="1887"/>
    </location>
</feature>
<feature type="modified residue" description="N6-methyllysine; alternate" evidence="15">
    <location>
        <position position="1887"/>
    </location>
</feature>
<feature type="modified residue" description="Phosphothreonine" evidence="16">
    <location>
        <position position="1894"/>
    </location>
</feature>
<feature type="modified residue" description="Phosphoserine" evidence="3">
    <location>
        <position position="1896"/>
    </location>
</feature>
<feature type="modified residue" description="Phosphoserine" evidence="16">
    <location>
        <position position="1899"/>
    </location>
</feature>
<feature type="modified residue" description="Phosphoserine" evidence="3">
    <location>
        <position position="1906"/>
    </location>
</feature>
<feature type="modified residue" description="N6,N6-dimethyllysine" evidence="15">
    <location>
        <position position="1908"/>
    </location>
</feature>
<feature type="modified residue" description="Phosphotyrosine" evidence="16">
    <location>
        <position position="1909"/>
    </location>
</feature>
<feature type="modified residue" description="Phosphothreonine" evidence="16">
    <location>
        <position position="1912"/>
    </location>
</feature>
<feature type="modified residue" description="Phosphoserine" evidence="16">
    <location>
        <position position="1913"/>
    </location>
</feature>
<feature type="modified residue" description="Phosphothreonine" evidence="3">
    <location>
        <position position="1915"/>
    </location>
</feature>
<feature type="modified residue" description="Phosphotyrosine" evidence="3">
    <location>
        <position position="1916"/>
    </location>
</feature>
<feature type="modified residue" description="Phosphoserine" evidence="16">
    <location>
        <position position="1917"/>
    </location>
</feature>
<feature type="modified residue" description="Phosphothreonine" evidence="3">
    <location>
        <position position="1919"/>
    </location>
</feature>
<feature type="modified residue" description="Phosphoserine" evidence="16">
    <location>
        <position position="1920"/>
    </location>
</feature>
<feature type="modified residue" description="N6,N6-dimethyllysine; alternate" evidence="15">
    <location>
        <position position="1922"/>
    </location>
</feature>
<feature type="modified residue" description="N6-acetyllysine; alternate" evidence="3">
    <location>
        <position position="1922"/>
    </location>
</feature>
<feature type="modified residue" description="N6-methyllysine; alternate" evidence="15">
    <location>
        <position position="1922"/>
    </location>
</feature>
<feature type="modified residue" description="Phosphotyrosine" evidence="16">
    <location>
        <position position="1923"/>
    </location>
</feature>
<feature type="modified residue" description="Phosphothreonine" evidence="16">
    <location>
        <position position="1926"/>
    </location>
</feature>
<feature type="modified residue" description="Phosphoserine" evidence="16">
    <location>
        <position position="1927"/>
    </location>
</feature>
<feature type="modified residue" description="Phosphothreonine" evidence="3">
    <location>
        <position position="1929"/>
    </location>
</feature>
<feature type="modified residue" description="Phosphotyrosine" evidence="3">
    <location>
        <position position="1930"/>
    </location>
</feature>
<feature type="modified residue" description="Phosphoserine" evidence="16">
    <location>
        <position position="1931"/>
    </location>
</feature>
<feature type="modified residue" description="Phosphothreonine" evidence="3">
    <location>
        <position position="1933"/>
    </location>
</feature>
<feature type="modified residue" description="Phosphoserine" evidence="16">
    <location>
        <position position="1934"/>
    </location>
</feature>
<feature type="modified residue" description="N6,N6-dimethyllysine; alternate" evidence="15">
    <location>
        <position position="1936"/>
    </location>
</feature>
<feature type="modified residue" description="N6-acetyllysine; alternate" evidence="3">
    <location>
        <position position="1936"/>
    </location>
</feature>
<feature type="modified residue" description="N6-methyllysine; alternate" evidence="15">
    <location>
        <position position="1936"/>
    </location>
</feature>
<feature type="cross-link" description="Glycyl lysine isopeptide (Lys-Gly) (interchain with G-Cter in ubiquitin); by NEDD4" evidence="3">
    <location>
        <position position="1268"/>
    </location>
</feature>
<feature type="mutagenesis site" description="Mice appear phenotypically normal. Simultaneous knockout of Xpa leads to growth retardation, skeletal abnormalities, cataracts, progressive motor neuron degeneration and death at 5-6 months." evidence="12">
    <original>K</original>
    <variation>R</variation>
    <location>
        <position position="1268"/>
    </location>
</feature>
<feature type="mutagenesis site" description="Loss of acetylation and loss of regulation of growth-factor-induced gene expression; when associated with R-1859; R-1866; R-1873; R-1887; R-1908; R-1922 and R-1936." evidence="10">
    <original>K</original>
    <variation>R</variation>
    <location>
        <position position="1838"/>
    </location>
</feature>
<feature type="mutagenesis site" description="Loss of methylation and dimethylation but no effect on phosphorylation; when associated with S-1859; S-1866; S-1873; S-1887; S-1908; S-1922 and S-1936." evidence="11">
    <original>K</original>
    <variation>S</variation>
    <location>
        <position position="1838"/>
    </location>
</feature>
<feature type="mutagenesis site" description="Loss of ubiquitination, no effect on interaction with WWP2; when associated with R-1866; R-1873; R-1887; R-1908 and R-1922. Loss of acetylation and loss of regulation of growth-factor-induced gene expression; when associated with R-1838; R-1866; R-1873; R-1887; R-1908; R-1922 and R-1936." evidence="6 10">
    <original>K</original>
    <variation>R</variation>
    <location>
        <position position="1859"/>
    </location>
</feature>
<feature type="mutagenesis site" description="Loss of methylation and dimethylation but no effect on phosphorylation; when associated with S-1838; S-1866; S-1873; S-1887; S-1908; S-1922 and S-1936. Highly decreases methylation and dimethylation; when associated with S-1866; S-1873; S-1887; S-1908; S-1922 and S-1936. Decreases methylation but no effect on dimethylation; when associated with S-1866; S-1887; S-1908 and S-1936." evidence="11">
    <original>K</original>
    <variation>S</variation>
    <location>
        <position position="1859"/>
    </location>
</feature>
<feature type="mutagenesis site" description="Loss of ubiquitination, no effect on interaction with WWP2; when associated with R-1859; R-1873; R-1887; R-1908 and R-1922. Loss of acetylation and loss of regulation of growth-factor-induced gene expression; when associated with R-1859; R-1859; R-1873; R-1887; R-1908; R-1922 and R-1936." evidence="6 10">
    <original>K</original>
    <variation>R</variation>
    <location>
        <position position="1866"/>
    </location>
</feature>
<feature type="mutagenesis site" description="Loss of methylation and dimethylation but no effect on phosphorylation; when associated with S-1838; S-1859; S-1873; S-1887; S-1908; S-1922 and S-1936. Highly decreases methylation and dimethylation; when associated with S-1859; S-1873; S-1887; S-1908; S-1922 and S-1936. Decreases methylation but no effect on dimethylation; when associated with S-1859; S-1887; S-1908 and S-1936." evidence="11">
    <original>K</original>
    <variation>S</variation>
    <location>
        <position position="1866"/>
    </location>
</feature>
<feature type="mutagenesis site" description="Loss of ubiquitination, no effect on interaction with WWP2; when associated with R-1859; R-1866; R-1887; R-1908 and R-1922. Loss of acetylation and loss of regulation of growth-factor-induced gene expression; when associated with R-1838; R-1859; R-1866; R-1887; R-1908; R-1922 and R-1936." evidence="6 10">
    <original>K</original>
    <variation>R</variation>
    <location>
        <position position="1873"/>
    </location>
</feature>
<feature type="mutagenesis site" description="Loss of methylation and dimethylation but no effect on phosphorylation; when associated with S-1838; S-1859; S-1866; S-1887; S-1908; S-1922 and S-1936. Highly decreases methylation and dimethylation; when associated with S-1859; S-1866; S-1887; S-1908 and S-1936." evidence="11">
    <original>K</original>
    <variation>S</variation>
    <location>
        <position position="1873"/>
    </location>
</feature>
<feature type="mutagenesis site" description="Loss of ubiquitination, no effect on interaction with WWP2; when associated with R-1859; R-1866; R-1873; R-1908 and R-1922. Loss of acetylation and loss of regulation of growth-factor-induced gene expression; when associated with R-1838; R-1859; R-1866; R-1873; R-1908; R-1922 and R-1936." evidence="6 10">
    <original>K</original>
    <variation>R</variation>
    <location>
        <position position="1887"/>
    </location>
</feature>
<feature type="mutagenesis site" description="Loss of methylation and dimethylation but no effect on phosphorylation; when associated with S-1838; S-1859; S-1866; S-1873; S-1908; S-1922 and S-1936. Highly decreases methylation and dimethylation; when associated with S-1859; S-1866; S-1873; S-1908; S-1922 and S-1936. Decreases methylation but no effect on dimethylation; when associated with S-1859; S-1866; S-1908 and S-1936." evidence="11">
    <original>K</original>
    <variation>S</variation>
    <location>
        <position position="1887"/>
    </location>
</feature>
<feature type="mutagenesis site" description="Loss of ubiquitination, no effect on interaction with WWP2; when associated with R-1859; R-1866; R-1873; R-1887 and R-1922. Loss of acetylation and loss of regulation of growth-factor-induced gene expression; when associated with R.1838; R-1859; R-1866; R-1873; R-1887; R-1922 and R-1936." evidence="6 10">
    <original>K</original>
    <variation>R</variation>
    <location>
        <position position="1908"/>
    </location>
</feature>
<feature type="mutagenesis site" description="Loss of methylation and dimethylation but no effect on phosphorylation; when associated with S-1838; S-1859; S-1866; S-1873; S-1887; S-1922 and S-1936. Highly decreases methylation and dimethylation; when associated with S-1859; S-1866; S-1873; S-1887; S-1922 and S-1936. Decreases methylation but no effect on dimethylation; when associated with S-1859; S-1866; S-1887 and S-1936." evidence="11">
    <original>K</original>
    <variation>S</variation>
    <location>
        <position position="1908"/>
    </location>
</feature>
<feature type="mutagenesis site" description="Loss of ubiquitination, no effect on interaction with WWP2; when associated with R-1859; R-1866; R-1873; R-1887 and R-1908. Loss of acetylation and loss of regulation of growth-factor-induced gene expression; when associated with R-1838; R-1859; R-1866; R-1873; R-1887; R-1908 and R-1936." evidence="6 10">
    <original>K</original>
    <variation>R</variation>
    <location>
        <position position="1922"/>
    </location>
</feature>
<feature type="mutagenesis site" description="Loss of methylation and dimethylation but no effect on phosphorylation; when associated with S-1838; S-1859; S-1866; S-1873; S-1887; S-1908 and S-1936. Highly decreases methylation and dimethylation; when associated with S-1859; S-1866; S-1873; S-1887; S-1908 and S-1936." evidence="11">
    <original>K</original>
    <variation>S</variation>
    <location>
        <position position="1922"/>
    </location>
</feature>
<feature type="mutagenesis site" description="Loss of acetylation and loss of regulation of growth-factor-induced gene expression; when associated with R-1838; R-1859; R-1866; R-1873; R-1887; R-1908 and R-1922." evidence="10">
    <original>K</original>
    <variation>R</variation>
    <location>
        <position position="1936"/>
    </location>
</feature>
<feature type="mutagenesis site" description="Loss of methylation and dimethylation but no effect on phosphorylation; when associated with S-1838; S-1859; S-1866; S-1873; S-1887; S-1908 and S-1922. Highly decreases methylation and dimethylation; when associated with S-1859; S-1866; S-1873; S-1887; S-1908 and S-1922. Decreases methylation but no effect on dimethylation; when associated with S-1859; S-1866 and S-1887." evidence="11">
    <original>K</original>
    <variation>S</variation>
    <location>
        <position position="1936"/>
    </location>
</feature>
<feature type="sequence conflict" description="In Ref. 1; AAA40071." evidence="14" ref="1">
    <original>P</original>
    <variation>R</variation>
    <location>
        <position position="1498"/>
    </location>
</feature>
<feature type="sequence conflict" description="In Ref. 1; AAA40071." evidence="14" ref="1">
    <location>
        <begin position="1499"/>
        <end position="1536"/>
    </location>
</feature>
<dbReference type="EC" id="2.7.7.6" evidence="3"/>
<dbReference type="EC" id="3.1.13.-" evidence="3"/>
<dbReference type="EC" id="2.7.7.48" evidence="3"/>
<dbReference type="EMBL" id="M12130">
    <property type="protein sequence ID" value="AAA40071.1"/>
    <property type="molecule type" value="Genomic_DNA"/>
</dbReference>
<dbReference type="EMBL" id="M14101">
    <property type="protein sequence ID" value="AAA40071.1"/>
    <property type="status" value="JOINED"/>
    <property type="molecule type" value="Genomic_DNA"/>
</dbReference>
<dbReference type="EMBL" id="AL603707">
    <property type="status" value="NOT_ANNOTATED_CDS"/>
    <property type="molecule type" value="Genomic_DNA"/>
</dbReference>
<dbReference type="CCDS" id="CCDS70217.1"/>
<dbReference type="PIR" id="A28490">
    <property type="entry name" value="A28490"/>
</dbReference>
<dbReference type="RefSeq" id="NP_001277997.1">
    <property type="nucleotide sequence ID" value="NM_001291068.1"/>
</dbReference>
<dbReference type="SMR" id="P08775"/>
<dbReference type="BioGRID" id="202996">
    <property type="interactions" value="48"/>
</dbReference>
<dbReference type="CORUM" id="P08775"/>
<dbReference type="DIP" id="DIP-46369N"/>
<dbReference type="FunCoup" id="P08775">
    <property type="interactions" value="3144"/>
</dbReference>
<dbReference type="IntAct" id="P08775">
    <property type="interactions" value="24"/>
</dbReference>
<dbReference type="MINT" id="P08775"/>
<dbReference type="STRING" id="10090.ENSMUSP00000050771"/>
<dbReference type="GlyGen" id="P08775">
    <property type="glycosylation" value="7 sites, 2 N-linked glycans (2 sites), 1 O-linked glycan (1 site)"/>
</dbReference>
<dbReference type="iPTMnet" id="P08775"/>
<dbReference type="PhosphoSitePlus" id="P08775"/>
<dbReference type="SwissPalm" id="P08775"/>
<dbReference type="jPOST" id="P08775"/>
<dbReference type="PaxDb" id="10090-ENSMUSP00000050771"/>
<dbReference type="ProteomicsDB" id="262702"/>
<dbReference type="Pumba" id="P08775"/>
<dbReference type="Antibodypedia" id="3208">
    <property type="antibodies" value="915 antibodies from 41 providers"/>
</dbReference>
<dbReference type="DNASU" id="20020"/>
<dbReference type="Ensembl" id="ENSMUST00000058470.16">
    <property type="protein sequence ID" value="ENSMUSP00000050771.10"/>
    <property type="gene ID" value="ENSMUSG00000005198.16"/>
</dbReference>
<dbReference type="GeneID" id="20020"/>
<dbReference type="KEGG" id="mmu:20020"/>
<dbReference type="UCSC" id="uc007jrk.2">
    <property type="organism name" value="mouse"/>
</dbReference>
<dbReference type="AGR" id="MGI:98086"/>
<dbReference type="CTD" id="5430"/>
<dbReference type="MGI" id="MGI:98086">
    <property type="gene designation" value="Polr2a"/>
</dbReference>
<dbReference type="VEuPathDB" id="HostDB:ENSMUSG00000005198"/>
<dbReference type="eggNOG" id="KOG0260">
    <property type="taxonomic scope" value="Eukaryota"/>
</dbReference>
<dbReference type="GeneTree" id="ENSGT00930000151033"/>
<dbReference type="InParanoid" id="P08775"/>
<dbReference type="OMA" id="KPCMGIV"/>
<dbReference type="OrthoDB" id="270392at2759"/>
<dbReference type="PhylomeDB" id="P08775"/>
<dbReference type="TreeFam" id="TF103036"/>
<dbReference type="Reactome" id="R-MMU-112382">
    <property type="pathway name" value="Formation of RNA Pol II elongation complex"/>
</dbReference>
<dbReference type="Reactome" id="R-MMU-113418">
    <property type="pathway name" value="Formation of the Early Elongation Complex"/>
</dbReference>
<dbReference type="Reactome" id="R-MMU-674695">
    <property type="pathway name" value="RNA Polymerase II Pre-transcription Events"/>
</dbReference>
<dbReference type="Reactome" id="R-MMU-6781823">
    <property type="pathway name" value="Formation of TC-NER Pre-Incision Complex"/>
</dbReference>
<dbReference type="Reactome" id="R-MMU-6782135">
    <property type="pathway name" value="Dual incision in TC-NER"/>
</dbReference>
<dbReference type="Reactome" id="R-MMU-6782210">
    <property type="pathway name" value="Gap-filling DNA repair synthesis and ligation in TC-NER"/>
</dbReference>
<dbReference type="Reactome" id="R-MMU-6796648">
    <property type="pathway name" value="TP53 Regulates Transcription of DNA Repair Genes"/>
</dbReference>
<dbReference type="Reactome" id="R-MMU-6803529">
    <property type="pathway name" value="FGFR2 alternative splicing"/>
</dbReference>
<dbReference type="Reactome" id="R-MMU-6807505">
    <property type="pathway name" value="RNA polymerase II transcribes snRNA genes"/>
</dbReference>
<dbReference type="Reactome" id="R-MMU-72086">
    <property type="pathway name" value="mRNA Capping"/>
</dbReference>
<dbReference type="Reactome" id="R-MMU-72163">
    <property type="pathway name" value="mRNA Splicing - Major Pathway"/>
</dbReference>
<dbReference type="Reactome" id="R-MMU-72165">
    <property type="pathway name" value="mRNA Splicing - Minor Pathway"/>
</dbReference>
<dbReference type="Reactome" id="R-MMU-72203">
    <property type="pathway name" value="Processing of Capped Intron-Containing Pre-mRNA"/>
</dbReference>
<dbReference type="Reactome" id="R-MMU-73776">
    <property type="pathway name" value="RNA Polymerase II Promoter Escape"/>
</dbReference>
<dbReference type="Reactome" id="R-MMU-73779">
    <property type="pathway name" value="RNA Polymerase II Transcription Pre-Initiation And Promoter Opening"/>
</dbReference>
<dbReference type="Reactome" id="R-MMU-75953">
    <property type="pathway name" value="RNA Polymerase II Transcription Initiation"/>
</dbReference>
<dbReference type="Reactome" id="R-MMU-75955">
    <property type="pathway name" value="RNA Polymerase II Transcription Elongation"/>
</dbReference>
<dbReference type="Reactome" id="R-MMU-76042">
    <property type="pathway name" value="RNA Polymerase II Transcription Initiation And Promoter Clearance"/>
</dbReference>
<dbReference type="Reactome" id="R-MMU-77075">
    <property type="pathway name" value="RNA Pol II CTD phosphorylation and interaction with CE"/>
</dbReference>
<dbReference type="Reactome" id="R-MMU-9018519">
    <property type="pathway name" value="Estrogen-dependent gene expression"/>
</dbReference>
<dbReference type="BioGRID-ORCS" id="20020">
    <property type="hits" value="17 hits in 80 CRISPR screens"/>
</dbReference>
<dbReference type="CD-CODE" id="CB5AE2BC">
    <property type="entry name" value="Synthetic Condensate 000337"/>
</dbReference>
<dbReference type="ChiTaRS" id="Polr2a">
    <property type="organism name" value="mouse"/>
</dbReference>
<dbReference type="PRO" id="PR:P08775"/>
<dbReference type="Proteomes" id="UP000000589">
    <property type="component" value="Chromosome 11"/>
</dbReference>
<dbReference type="RNAct" id="P08775">
    <property type="molecule type" value="protein"/>
</dbReference>
<dbReference type="Bgee" id="ENSMUSG00000005198">
    <property type="expression patterns" value="Expressed in retinal neural layer and 268 other cell types or tissues"/>
</dbReference>
<dbReference type="ExpressionAtlas" id="P08775">
    <property type="expression patterns" value="baseline and differential"/>
</dbReference>
<dbReference type="GO" id="GO:0000791">
    <property type="term" value="C:euchromatin"/>
    <property type="evidence" value="ECO:0000314"/>
    <property type="project" value="BHF-UCL"/>
</dbReference>
<dbReference type="GO" id="GO:0005739">
    <property type="term" value="C:mitochondrion"/>
    <property type="evidence" value="ECO:0007669"/>
    <property type="project" value="GOC"/>
</dbReference>
<dbReference type="GO" id="GO:0005654">
    <property type="term" value="C:nucleoplasm"/>
    <property type="evidence" value="ECO:0000304"/>
    <property type="project" value="Reactome"/>
</dbReference>
<dbReference type="GO" id="GO:0005634">
    <property type="term" value="C:nucleus"/>
    <property type="evidence" value="ECO:0000314"/>
    <property type="project" value="MGI"/>
</dbReference>
<dbReference type="GO" id="GO:0005665">
    <property type="term" value="C:RNA polymerase II, core complex"/>
    <property type="evidence" value="ECO:0000250"/>
    <property type="project" value="UniProtKB"/>
</dbReference>
<dbReference type="GO" id="GO:0001046">
    <property type="term" value="F:core promoter sequence-specific DNA binding"/>
    <property type="evidence" value="ECO:0000314"/>
    <property type="project" value="BHF-UCL"/>
</dbReference>
<dbReference type="GO" id="GO:0003677">
    <property type="term" value="F:DNA binding"/>
    <property type="evidence" value="ECO:0000314"/>
    <property type="project" value="MGI"/>
</dbReference>
<dbReference type="GO" id="GO:0003899">
    <property type="term" value="F:DNA-directed RNA polymerase activity"/>
    <property type="evidence" value="ECO:0000250"/>
    <property type="project" value="UniProtKB"/>
</dbReference>
<dbReference type="GO" id="GO:0016787">
    <property type="term" value="F:hydrolase activity"/>
    <property type="evidence" value="ECO:0007669"/>
    <property type="project" value="UniProtKB-KW"/>
</dbReference>
<dbReference type="GO" id="GO:0046872">
    <property type="term" value="F:metal ion binding"/>
    <property type="evidence" value="ECO:0007669"/>
    <property type="project" value="UniProtKB-KW"/>
</dbReference>
<dbReference type="GO" id="GO:1990841">
    <property type="term" value="F:promoter-specific chromatin binding"/>
    <property type="evidence" value="ECO:0000250"/>
    <property type="project" value="UniProtKB"/>
</dbReference>
<dbReference type="GO" id="GO:0071453">
    <property type="term" value="P:cellular response to oxygen levels"/>
    <property type="evidence" value="ECO:0007669"/>
    <property type="project" value="Ensembl"/>
</dbReference>
<dbReference type="GO" id="GO:0006353">
    <property type="term" value="P:DNA-templated transcription termination"/>
    <property type="evidence" value="ECO:0000250"/>
    <property type="project" value="UniProtKB"/>
</dbReference>
<dbReference type="GO" id="GO:0033120">
    <property type="term" value="P:positive regulation of RNA splicing"/>
    <property type="evidence" value="ECO:0000250"/>
    <property type="project" value="UniProtKB"/>
</dbReference>
<dbReference type="GO" id="GO:0006366">
    <property type="term" value="P:transcription by RNA polymerase II"/>
    <property type="evidence" value="ECO:0000250"/>
    <property type="project" value="UniProtKB"/>
</dbReference>
<dbReference type="CDD" id="cd02584">
    <property type="entry name" value="RNAP_II_Rpb1_C"/>
    <property type="match status" value="1"/>
</dbReference>
<dbReference type="CDD" id="cd02733">
    <property type="entry name" value="RNAP_II_RPB1_N"/>
    <property type="match status" value="1"/>
</dbReference>
<dbReference type="DisProt" id="DP00181"/>
<dbReference type="FunFam" id="2.40.40.20:FF:000019">
    <property type="entry name" value="DNA-directed RNA polymerase II subunit RPB1"/>
    <property type="match status" value="1"/>
</dbReference>
<dbReference type="FunFam" id="1.10.132.30:FF:000001">
    <property type="entry name" value="DNA-directed RNA polymerase subunit"/>
    <property type="match status" value="1"/>
</dbReference>
<dbReference type="FunFam" id="1.10.150.390:FF:000001">
    <property type="entry name" value="DNA-directed RNA polymerase subunit"/>
    <property type="match status" value="1"/>
</dbReference>
<dbReference type="FunFam" id="1.10.274.100:FF:000001">
    <property type="entry name" value="DNA-directed RNA polymerase subunit"/>
    <property type="match status" value="1"/>
</dbReference>
<dbReference type="FunFam" id="3.30.1360.140:FF:000001">
    <property type="entry name" value="DNA-directed RNA polymerase subunit"/>
    <property type="match status" value="1"/>
</dbReference>
<dbReference type="FunFam" id="3.30.1490.180:FF:000001">
    <property type="entry name" value="DNA-directed RNA polymerase subunit"/>
    <property type="match status" value="1"/>
</dbReference>
<dbReference type="FunFam" id="4.10.860.120:FF:000002">
    <property type="entry name" value="DNA-directed RNA polymerase subunit"/>
    <property type="match status" value="1"/>
</dbReference>
<dbReference type="FunFam" id="4.10.860.120:FF:000005">
    <property type="entry name" value="DNA-directed RNA polymerase subunit"/>
    <property type="match status" value="1"/>
</dbReference>
<dbReference type="Gene3D" id="1.10.132.30">
    <property type="match status" value="1"/>
</dbReference>
<dbReference type="Gene3D" id="1.10.150.390">
    <property type="match status" value="1"/>
</dbReference>
<dbReference type="Gene3D" id="2.40.40.20">
    <property type="match status" value="1"/>
</dbReference>
<dbReference type="Gene3D" id="3.30.1360.140">
    <property type="match status" value="1"/>
</dbReference>
<dbReference type="Gene3D" id="6.10.250.2940">
    <property type="match status" value="1"/>
</dbReference>
<dbReference type="Gene3D" id="6.20.50.80">
    <property type="match status" value="1"/>
</dbReference>
<dbReference type="Gene3D" id="3.30.1490.180">
    <property type="entry name" value="RNA polymerase ii"/>
    <property type="match status" value="1"/>
</dbReference>
<dbReference type="Gene3D" id="4.10.860.120">
    <property type="entry name" value="RNA polymerase II, clamp domain"/>
    <property type="match status" value="2"/>
</dbReference>
<dbReference type="Gene3D" id="1.10.274.100">
    <property type="entry name" value="RNA polymerase Rpb1, domain 3"/>
    <property type="match status" value="1"/>
</dbReference>
<dbReference type="InterPro" id="IPR045867">
    <property type="entry name" value="DNA-dir_RpoC_beta_prime"/>
</dbReference>
<dbReference type="InterPro" id="IPR000722">
    <property type="entry name" value="RNA_pol_asu"/>
</dbReference>
<dbReference type="InterPro" id="IPR000684">
    <property type="entry name" value="RNA_pol_II_repeat_euk"/>
</dbReference>
<dbReference type="InterPro" id="IPR006592">
    <property type="entry name" value="RNA_pol_N"/>
</dbReference>
<dbReference type="InterPro" id="IPR007080">
    <property type="entry name" value="RNA_pol_Rpb1_1"/>
</dbReference>
<dbReference type="InterPro" id="IPR007066">
    <property type="entry name" value="RNA_pol_Rpb1_3"/>
</dbReference>
<dbReference type="InterPro" id="IPR042102">
    <property type="entry name" value="RNA_pol_Rpb1_3_sf"/>
</dbReference>
<dbReference type="InterPro" id="IPR007083">
    <property type="entry name" value="RNA_pol_Rpb1_4"/>
</dbReference>
<dbReference type="InterPro" id="IPR007081">
    <property type="entry name" value="RNA_pol_Rpb1_5"/>
</dbReference>
<dbReference type="InterPro" id="IPR007075">
    <property type="entry name" value="RNA_pol_Rpb1_6"/>
</dbReference>
<dbReference type="InterPro" id="IPR007073">
    <property type="entry name" value="RNA_pol_Rpb1_7"/>
</dbReference>
<dbReference type="InterPro" id="IPR038593">
    <property type="entry name" value="RNA_pol_Rpb1_7_sf"/>
</dbReference>
<dbReference type="InterPro" id="IPR044893">
    <property type="entry name" value="RNA_pol_Rpb1_clamp_domain"/>
</dbReference>
<dbReference type="InterPro" id="IPR038120">
    <property type="entry name" value="Rpb1_funnel_sf"/>
</dbReference>
<dbReference type="NCBIfam" id="NF006336">
    <property type="entry name" value="PRK08566.1"/>
    <property type="match status" value="1"/>
</dbReference>
<dbReference type="PANTHER" id="PTHR19376">
    <property type="entry name" value="DNA-DIRECTED RNA POLYMERASE"/>
    <property type="match status" value="1"/>
</dbReference>
<dbReference type="PANTHER" id="PTHR19376:SF37">
    <property type="entry name" value="DNA-DIRECTED RNA POLYMERASE II SUBUNIT RPB1"/>
    <property type="match status" value="1"/>
</dbReference>
<dbReference type="Pfam" id="PF04997">
    <property type="entry name" value="RNA_pol_Rpb1_1"/>
    <property type="match status" value="1"/>
</dbReference>
<dbReference type="Pfam" id="PF00623">
    <property type="entry name" value="RNA_pol_Rpb1_2"/>
    <property type="match status" value="1"/>
</dbReference>
<dbReference type="Pfam" id="PF04983">
    <property type="entry name" value="RNA_pol_Rpb1_3"/>
    <property type="match status" value="1"/>
</dbReference>
<dbReference type="Pfam" id="PF05000">
    <property type="entry name" value="RNA_pol_Rpb1_4"/>
    <property type="match status" value="1"/>
</dbReference>
<dbReference type="Pfam" id="PF04998">
    <property type="entry name" value="RNA_pol_Rpb1_5"/>
    <property type="match status" value="1"/>
</dbReference>
<dbReference type="Pfam" id="PF04992">
    <property type="entry name" value="RNA_pol_Rpb1_6"/>
    <property type="match status" value="1"/>
</dbReference>
<dbReference type="Pfam" id="PF04990">
    <property type="entry name" value="RNA_pol_Rpb1_7"/>
    <property type="match status" value="1"/>
</dbReference>
<dbReference type="Pfam" id="PF05001">
    <property type="entry name" value="RNA_pol_Rpb1_R"/>
    <property type="match status" value="23"/>
</dbReference>
<dbReference type="PRINTS" id="PR01217">
    <property type="entry name" value="PRICHEXTENSN"/>
</dbReference>
<dbReference type="SMART" id="SM00663">
    <property type="entry name" value="RPOLA_N"/>
    <property type="match status" value="1"/>
</dbReference>
<dbReference type="SUPFAM" id="SSF64484">
    <property type="entry name" value="beta and beta-prime subunits of DNA dependent RNA-polymerase"/>
    <property type="match status" value="1"/>
</dbReference>
<dbReference type="PROSITE" id="PS00115">
    <property type="entry name" value="RNA_POL_II_REPEAT"/>
    <property type="match status" value="42"/>
</dbReference>
<organism>
    <name type="scientific">Mus musculus</name>
    <name type="common">Mouse</name>
    <dbReference type="NCBI Taxonomy" id="10090"/>
    <lineage>
        <taxon>Eukaryota</taxon>
        <taxon>Metazoa</taxon>
        <taxon>Chordata</taxon>
        <taxon>Craniata</taxon>
        <taxon>Vertebrata</taxon>
        <taxon>Euteleostomi</taxon>
        <taxon>Mammalia</taxon>
        <taxon>Eutheria</taxon>
        <taxon>Euarchontoglires</taxon>
        <taxon>Glires</taxon>
        <taxon>Rodentia</taxon>
        <taxon>Myomorpha</taxon>
        <taxon>Muroidea</taxon>
        <taxon>Muridae</taxon>
        <taxon>Murinae</taxon>
        <taxon>Mus</taxon>
        <taxon>Mus</taxon>
    </lineage>
</organism>
<protein>
    <recommendedName>
        <fullName>DNA-directed RNA polymerase II subunit RPB1</fullName>
        <shortName>RNA polymerase II subunit B1</shortName>
        <ecNumber evidence="3">2.7.7.6</ecNumber>
    </recommendedName>
    <alternativeName>
        <fullName>3'-5' exoribonuclease</fullName>
        <ecNumber evidence="3">3.1.13.-</ecNumber>
    </alternativeName>
    <alternativeName>
        <fullName>DNA-directed RNA polymerase II subunit A</fullName>
    </alternativeName>
    <alternativeName>
        <fullName>DNA-directed RNA polymerase III largest subunit</fullName>
    </alternativeName>
    <alternativeName>
        <fullName>RNA-directed RNA polymerase II subunit RPB1</fullName>
        <ecNumber evidence="3">2.7.7.48</ecNumber>
    </alternativeName>
</protein>
<evidence type="ECO:0000250" key="1">
    <source>
        <dbReference type="UniProtKB" id="G3MZY8"/>
    </source>
</evidence>
<evidence type="ECO:0000250" key="2">
    <source>
        <dbReference type="UniProtKB" id="P04050"/>
    </source>
</evidence>
<evidence type="ECO:0000250" key="3">
    <source>
        <dbReference type="UniProtKB" id="P24928"/>
    </source>
</evidence>
<evidence type="ECO:0000256" key="4">
    <source>
        <dbReference type="SAM" id="MobiDB-lite"/>
    </source>
</evidence>
<evidence type="ECO:0000269" key="5">
    <source>
    </source>
</evidence>
<evidence type="ECO:0000269" key="6">
    <source>
    </source>
</evidence>
<evidence type="ECO:0000269" key="7">
    <source>
    </source>
</evidence>
<evidence type="ECO:0000269" key="8">
    <source>
    </source>
</evidence>
<evidence type="ECO:0000269" key="9">
    <source>
    </source>
</evidence>
<evidence type="ECO:0000269" key="10">
    <source>
    </source>
</evidence>
<evidence type="ECO:0000269" key="11">
    <source>
    </source>
</evidence>
<evidence type="ECO:0000269" key="12">
    <source>
    </source>
</evidence>
<evidence type="ECO:0000269" key="13">
    <source>
    </source>
</evidence>
<evidence type="ECO:0000305" key="14"/>
<evidence type="ECO:0000305" key="15">
    <source>
    </source>
</evidence>
<evidence type="ECO:0007744" key="16">
    <source>
    </source>
</evidence>